<reference key="1">
    <citation type="journal article" date="2010" name="J. Bacteriol.">
        <title>Complete genome sequence of Beijerinckia indica subsp. indica.</title>
        <authorList>
            <person name="Tamas I."/>
            <person name="Dedysh S.N."/>
            <person name="Liesack W."/>
            <person name="Stott M.B."/>
            <person name="Alam M."/>
            <person name="Murrell J.C."/>
            <person name="Dunfield P.F."/>
        </authorList>
    </citation>
    <scope>NUCLEOTIDE SEQUENCE [LARGE SCALE GENOMIC DNA]</scope>
    <source>
        <strain>ATCC 9039 / DSM 1715 / NCIMB 8712</strain>
    </source>
</reference>
<feature type="chain" id="PRO_1000122619" description="Putative membrane protein insertion efficiency factor">
    <location>
        <begin position="1"/>
        <end position="123"/>
    </location>
</feature>
<protein>
    <recommendedName>
        <fullName evidence="1">Putative membrane protein insertion efficiency factor</fullName>
    </recommendedName>
</protein>
<proteinExistence type="inferred from homology"/>
<gene>
    <name type="ordered locus">Bind_1573</name>
</gene>
<name>YIDD_BEII9</name>
<accession>B2IBC1</accession>
<keyword id="KW-0997">Cell inner membrane</keyword>
<keyword id="KW-1003">Cell membrane</keyword>
<keyword id="KW-0472">Membrane</keyword>
<keyword id="KW-1185">Reference proteome</keyword>
<sequence>MRRFVRSLSSTGRSQTGSLPVRGLRKLLRFYQLTFSSLVGTQCRHLPTCSAYMDEALARHGVWAGLFIGLARLSRCHPWGTAGYDPVPDQLDANVPRLQPWRHGRWRGPLEITWKPEHKDQNL</sequence>
<dbReference type="EMBL" id="CP001016">
    <property type="protein sequence ID" value="ACB95205.1"/>
    <property type="molecule type" value="Genomic_DNA"/>
</dbReference>
<dbReference type="RefSeq" id="WP_012384562.1">
    <property type="nucleotide sequence ID" value="NC_010581.1"/>
</dbReference>
<dbReference type="STRING" id="395963.Bind_1573"/>
<dbReference type="KEGG" id="bid:Bind_1573"/>
<dbReference type="eggNOG" id="COG0759">
    <property type="taxonomic scope" value="Bacteria"/>
</dbReference>
<dbReference type="HOGENOM" id="CLU_144811_0_0_5"/>
<dbReference type="OrthoDB" id="9801753at2"/>
<dbReference type="Proteomes" id="UP000001695">
    <property type="component" value="Chromosome"/>
</dbReference>
<dbReference type="GO" id="GO:0005886">
    <property type="term" value="C:plasma membrane"/>
    <property type="evidence" value="ECO:0007669"/>
    <property type="project" value="UniProtKB-SubCell"/>
</dbReference>
<dbReference type="HAMAP" id="MF_00386">
    <property type="entry name" value="UPF0161_YidD"/>
    <property type="match status" value="1"/>
</dbReference>
<dbReference type="InterPro" id="IPR002696">
    <property type="entry name" value="Membr_insert_effic_factor_YidD"/>
</dbReference>
<dbReference type="NCBIfam" id="TIGR00278">
    <property type="entry name" value="membrane protein insertion efficiency factor YidD"/>
    <property type="match status" value="1"/>
</dbReference>
<dbReference type="PANTHER" id="PTHR33383">
    <property type="entry name" value="MEMBRANE PROTEIN INSERTION EFFICIENCY FACTOR-RELATED"/>
    <property type="match status" value="1"/>
</dbReference>
<dbReference type="PANTHER" id="PTHR33383:SF1">
    <property type="entry name" value="MEMBRANE PROTEIN INSERTION EFFICIENCY FACTOR-RELATED"/>
    <property type="match status" value="1"/>
</dbReference>
<dbReference type="Pfam" id="PF01809">
    <property type="entry name" value="YidD"/>
    <property type="match status" value="1"/>
</dbReference>
<dbReference type="SMART" id="SM01234">
    <property type="entry name" value="Haemolytic"/>
    <property type="match status" value="1"/>
</dbReference>
<comment type="function">
    <text evidence="1">Could be involved in insertion of integral membrane proteins into the membrane.</text>
</comment>
<comment type="subcellular location">
    <subcellularLocation>
        <location evidence="1">Cell inner membrane</location>
        <topology evidence="1">Peripheral membrane protein</topology>
        <orientation evidence="1">Cytoplasmic side</orientation>
    </subcellularLocation>
</comment>
<comment type="similarity">
    <text evidence="1">Belongs to the UPF0161 family.</text>
</comment>
<organism>
    <name type="scientific">Beijerinckia indica subsp. indica (strain ATCC 9039 / DSM 1715 / NCIMB 8712)</name>
    <dbReference type="NCBI Taxonomy" id="395963"/>
    <lineage>
        <taxon>Bacteria</taxon>
        <taxon>Pseudomonadati</taxon>
        <taxon>Pseudomonadota</taxon>
        <taxon>Alphaproteobacteria</taxon>
        <taxon>Hyphomicrobiales</taxon>
        <taxon>Beijerinckiaceae</taxon>
        <taxon>Beijerinckia</taxon>
    </lineage>
</organism>
<evidence type="ECO:0000255" key="1">
    <source>
        <dbReference type="HAMAP-Rule" id="MF_00386"/>
    </source>
</evidence>